<organism>
    <name type="scientific">Scolopendra morsitans</name>
    <name type="common">Tanzanian blue ringleg centipede</name>
    <dbReference type="NCBI Taxonomy" id="943129"/>
    <lineage>
        <taxon>Eukaryota</taxon>
        <taxon>Metazoa</taxon>
        <taxon>Ecdysozoa</taxon>
        <taxon>Arthropoda</taxon>
        <taxon>Myriapoda</taxon>
        <taxon>Chilopoda</taxon>
        <taxon>Pleurostigmophora</taxon>
        <taxon>Scolopendromorpha</taxon>
        <taxon>Scolopendridae</taxon>
        <taxon>Scolopendra</taxon>
    </lineage>
</organism>
<name>TX93A_SCOMO</name>
<accession>A0A023W0V6</accession>
<protein>
    <recommendedName>
        <fullName evidence="2">U-scoloptoxin(09)-Sm3a</fullName>
        <shortName evidence="2">U-SLPTX(09)-Sm3a</shortName>
    </recommendedName>
    <alternativeName>
        <fullName evidence="5">U-SLPTX-Sm3a</fullName>
    </alternativeName>
</protein>
<reference key="1">
    <citation type="journal article" date="2014" name="J. Proteomics">
        <title>Multifunctional warheads: diversification of the toxin arsenal of centipedes via novel multidomain transcripts.</title>
        <authorList>
            <person name="Undheim E.A."/>
            <person name="Sunagar K."/>
            <person name="Hamilton B.R."/>
            <person name="Jones A."/>
            <person name="Venter D.J."/>
            <person name="Fry B.G."/>
            <person name="King G.F."/>
        </authorList>
    </citation>
    <scope>NUCLEOTIDE SEQUENCE [MRNA]</scope>
    <source>
        <tissue>Venom gland</tissue>
    </source>
</reference>
<reference key="2">
    <citation type="journal article" date="2014" name="Mol. Biol. Evol.">
        <title>Clawing through evolution: toxin diversification and convergence in the ancient lineage Chilopoda (centipedes).</title>
        <authorList>
            <person name="Undheim E.A."/>
            <person name="Jones A."/>
            <person name="Clauser K.R."/>
            <person name="Holland J.W."/>
            <person name="Pineda S.S."/>
            <person name="King G.F."/>
            <person name="Fry B.G."/>
        </authorList>
    </citation>
    <scope>NOMENCLATURE</scope>
</reference>
<evidence type="ECO:0000255" key="1"/>
<evidence type="ECO:0000303" key="2">
    <source>
    </source>
</evidence>
<evidence type="ECO:0000305" key="3"/>
<evidence type="ECO:0000305" key="4">
    <source>
    </source>
</evidence>
<evidence type="ECO:0000312" key="5">
    <source>
        <dbReference type="EMBL" id="AHY22604.1"/>
    </source>
</evidence>
<sequence>MNANSIFLCFFIMLIGCTLTHSCPSGCYCDQVDGNKCRPEEGTNPHLCLGKYCKTPDSSSVITGNQDEKTQAKG</sequence>
<feature type="signal peptide" evidence="1">
    <location>
        <begin position="1"/>
        <end position="22"/>
    </location>
</feature>
<feature type="chain" id="PRO_5001524790" description="U-scoloptoxin(09)-Sm3a" evidence="3">
    <location>
        <begin position="23"/>
        <end position="74"/>
    </location>
</feature>
<dbReference type="EMBL" id="KF130753">
    <property type="protein sequence ID" value="AHY22604.1"/>
    <property type="molecule type" value="mRNA"/>
</dbReference>
<dbReference type="GO" id="GO:0005576">
    <property type="term" value="C:extracellular region"/>
    <property type="evidence" value="ECO:0007669"/>
    <property type="project" value="UniProtKB-SubCell"/>
</dbReference>
<dbReference type="GO" id="GO:0090729">
    <property type="term" value="F:toxin activity"/>
    <property type="evidence" value="ECO:0007669"/>
    <property type="project" value="UniProtKB-KW"/>
</dbReference>
<comment type="subcellular location">
    <subcellularLocation>
        <location evidence="4">Secreted</location>
    </subcellularLocation>
</comment>
<comment type="tissue specificity">
    <text evidence="4">Expressed by the venom gland.</text>
</comment>
<comment type="PTM">
    <text evidence="3">Contains 3 disulfide bonds.</text>
</comment>
<comment type="similarity">
    <text evidence="3">Belongs to the scoloptoxin-09 family.</text>
</comment>
<proteinExistence type="inferred from homology"/>
<keyword id="KW-1015">Disulfide bond</keyword>
<keyword id="KW-0964">Secreted</keyword>
<keyword id="KW-0732">Signal</keyword>
<keyword id="KW-0800">Toxin</keyword>